<geneLocation type="chloroplast"/>
<feature type="chain" id="PRO_0000124433" description="Small ribosomal subunit protein uS7c">
    <location>
        <begin position="1"/>
        <end position="155"/>
    </location>
</feature>
<proteinExistence type="inferred from homology"/>
<reference key="1">
    <citation type="submission" date="1999-01" db="EMBL/GenBank/DDBJ databases">
        <authorList>
            <person name="Hou B.K."/>
            <person name="Chen Z.H."/>
        </authorList>
    </citation>
    <scope>NUCLEOTIDE SEQUENCE [GENOMIC DNA]</scope>
    <source>
        <strain>cv. H165</strain>
    </source>
</reference>
<gene>
    <name type="primary">rps7</name>
</gene>
<dbReference type="EMBL" id="AF124376">
    <property type="protein sequence ID" value="AAD27618.1"/>
    <property type="molecule type" value="Genomic_DNA"/>
</dbReference>
<dbReference type="RefSeq" id="YP_005089998.1">
    <property type="nucleotide sequence ID" value="NC_016734.1"/>
</dbReference>
<dbReference type="RefSeq" id="YP_005090012.1">
    <property type="nucleotide sequence ID" value="NC_016734.1"/>
</dbReference>
<dbReference type="SMR" id="P61842"/>
<dbReference type="EnsemblPlants" id="CDX95213">
    <property type="protein sequence ID" value="CDX95213"/>
    <property type="gene ID" value="GSBRNA2T00100816001"/>
</dbReference>
<dbReference type="EnsemblPlants" id="CDY19673">
    <property type="protein sequence ID" value="CDY19673"/>
    <property type="gene ID" value="GSBRNA2T00009383001"/>
</dbReference>
<dbReference type="EnsemblPlants" id="CDY45545">
    <property type="protein sequence ID" value="CDY45545"/>
    <property type="gene ID" value="GSBRNA2T00082245001"/>
</dbReference>
<dbReference type="GeneID" id="11542047"/>
<dbReference type="GeneID" id="11542091"/>
<dbReference type="Gramene" id="CDX95213">
    <property type="protein sequence ID" value="CDX95213"/>
    <property type="gene ID" value="GSBRNA2T00100816001"/>
</dbReference>
<dbReference type="Gramene" id="CDY19673">
    <property type="protein sequence ID" value="CDY19673"/>
    <property type="gene ID" value="GSBRNA2T00009383001"/>
</dbReference>
<dbReference type="Gramene" id="CDY45545">
    <property type="protein sequence ID" value="CDY45545"/>
    <property type="gene ID" value="GSBRNA2T00082245001"/>
</dbReference>
<dbReference type="KEGG" id="bna:11542047"/>
<dbReference type="KEGG" id="bna:11542091"/>
<dbReference type="OMA" id="DDTHRMA"/>
<dbReference type="OrthoDB" id="35139at2759"/>
<dbReference type="GO" id="GO:0009507">
    <property type="term" value="C:chloroplast"/>
    <property type="evidence" value="ECO:0007669"/>
    <property type="project" value="UniProtKB-SubCell"/>
</dbReference>
<dbReference type="GO" id="GO:0015935">
    <property type="term" value="C:small ribosomal subunit"/>
    <property type="evidence" value="ECO:0007669"/>
    <property type="project" value="InterPro"/>
</dbReference>
<dbReference type="GO" id="GO:0019843">
    <property type="term" value="F:rRNA binding"/>
    <property type="evidence" value="ECO:0007669"/>
    <property type="project" value="UniProtKB-UniRule"/>
</dbReference>
<dbReference type="GO" id="GO:0003735">
    <property type="term" value="F:structural constituent of ribosome"/>
    <property type="evidence" value="ECO:0007669"/>
    <property type="project" value="InterPro"/>
</dbReference>
<dbReference type="GO" id="GO:0006412">
    <property type="term" value="P:translation"/>
    <property type="evidence" value="ECO:0007669"/>
    <property type="project" value="UniProtKB-UniRule"/>
</dbReference>
<dbReference type="CDD" id="cd14871">
    <property type="entry name" value="uS7_Chloroplast"/>
    <property type="match status" value="1"/>
</dbReference>
<dbReference type="FunFam" id="1.10.455.10:FF:000001">
    <property type="entry name" value="30S ribosomal protein S7"/>
    <property type="match status" value="1"/>
</dbReference>
<dbReference type="Gene3D" id="1.10.455.10">
    <property type="entry name" value="Ribosomal protein S7 domain"/>
    <property type="match status" value="1"/>
</dbReference>
<dbReference type="HAMAP" id="MF_00480_B">
    <property type="entry name" value="Ribosomal_uS7_B"/>
    <property type="match status" value="1"/>
</dbReference>
<dbReference type="InterPro" id="IPR000235">
    <property type="entry name" value="Ribosomal_uS7"/>
</dbReference>
<dbReference type="InterPro" id="IPR005717">
    <property type="entry name" value="Ribosomal_uS7_bac/org-type"/>
</dbReference>
<dbReference type="InterPro" id="IPR020606">
    <property type="entry name" value="Ribosomal_uS7_CS"/>
</dbReference>
<dbReference type="InterPro" id="IPR023798">
    <property type="entry name" value="Ribosomal_uS7_dom"/>
</dbReference>
<dbReference type="InterPro" id="IPR036823">
    <property type="entry name" value="Ribosomal_uS7_dom_sf"/>
</dbReference>
<dbReference type="NCBIfam" id="TIGR01029">
    <property type="entry name" value="rpsG_bact"/>
    <property type="match status" value="1"/>
</dbReference>
<dbReference type="PANTHER" id="PTHR11205">
    <property type="entry name" value="RIBOSOMAL PROTEIN S7"/>
    <property type="match status" value="1"/>
</dbReference>
<dbReference type="Pfam" id="PF00177">
    <property type="entry name" value="Ribosomal_S7"/>
    <property type="match status" value="1"/>
</dbReference>
<dbReference type="PIRSF" id="PIRSF002122">
    <property type="entry name" value="RPS7p_RPS7a_RPS5e_RPS7o"/>
    <property type="match status" value="1"/>
</dbReference>
<dbReference type="SUPFAM" id="SSF47973">
    <property type="entry name" value="Ribosomal protein S7"/>
    <property type="match status" value="1"/>
</dbReference>
<dbReference type="PROSITE" id="PS00052">
    <property type="entry name" value="RIBOSOMAL_S7"/>
    <property type="match status" value="1"/>
</dbReference>
<comment type="function">
    <text evidence="1">One of the primary rRNA binding proteins, it binds directly to 16S rRNA where it nucleates assembly of the head domain of the 30S subunit.</text>
</comment>
<comment type="subunit">
    <text>Part of the 30S ribosomal subunit.</text>
</comment>
<comment type="subcellular location">
    <subcellularLocation>
        <location>Plastid</location>
        <location>Chloroplast</location>
    </subcellularLocation>
</comment>
<comment type="similarity">
    <text evidence="2">Belongs to the universal ribosomal protein uS7 family.</text>
</comment>
<keyword id="KW-0150">Chloroplast</keyword>
<keyword id="KW-0934">Plastid</keyword>
<keyword id="KW-0687">Ribonucleoprotein</keyword>
<keyword id="KW-0689">Ribosomal protein</keyword>
<keyword id="KW-0694">RNA-binding</keyword>
<keyword id="KW-0699">rRNA-binding</keyword>
<name>RR7_BRANA</name>
<evidence type="ECO:0000250" key="1"/>
<evidence type="ECO:0000305" key="2"/>
<sequence length="155" mass="17357">MSRRGTAEEKTAKSDPIYRNRLVNMLVNRILKHGKKSLAYQIIYRALKKIQQKTETNPLSVLRQAIRGVTPDIAVKARRVGGSTHQVPIEIGSTQGKALAIRWLLGASRKRPGRNMAFKLSSELVDAAKGSGDAIRKKEETHRMAEANRAFAHFR</sequence>
<accession>P61842</accession>
<accession>P56800</accession>
<accession>Q9XQ95</accession>
<protein>
    <recommendedName>
        <fullName evidence="2">Small ribosomal subunit protein uS7c</fullName>
    </recommendedName>
    <alternativeName>
        <fullName>30S ribosomal protein S7, chloroplastic</fullName>
    </alternativeName>
</protein>
<organism>
    <name type="scientific">Brassica napus</name>
    <name type="common">Rape</name>
    <dbReference type="NCBI Taxonomy" id="3708"/>
    <lineage>
        <taxon>Eukaryota</taxon>
        <taxon>Viridiplantae</taxon>
        <taxon>Streptophyta</taxon>
        <taxon>Embryophyta</taxon>
        <taxon>Tracheophyta</taxon>
        <taxon>Spermatophyta</taxon>
        <taxon>Magnoliopsida</taxon>
        <taxon>eudicotyledons</taxon>
        <taxon>Gunneridae</taxon>
        <taxon>Pentapetalae</taxon>
        <taxon>rosids</taxon>
        <taxon>malvids</taxon>
        <taxon>Brassicales</taxon>
        <taxon>Brassicaceae</taxon>
        <taxon>Brassiceae</taxon>
        <taxon>Brassica</taxon>
    </lineage>
</organism>